<reference key="1">
    <citation type="journal article" date="2009" name="Proc. Natl. Acad. Sci. U.S.A.">
        <title>Characterizing a model human gut microbiota composed of members of its two dominant bacterial phyla.</title>
        <authorList>
            <person name="Mahowald M.A."/>
            <person name="Rey F.E."/>
            <person name="Seedorf H."/>
            <person name="Turnbaugh P.J."/>
            <person name="Fulton R.S."/>
            <person name="Wollam A."/>
            <person name="Shah N."/>
            <person name="Wang C."/>
            <person name="Magrini V."/>
            <person name="Wilson R.K."/>
            <person name="Cantarel B.L."/>
            <person name="Coutinho P.M."/>
            <person name="Henrissat B."/>
            <person name="Crock L.W."/>
            <person name="Russell A."/>
            <person name="Verberkmoes N.C."/>
            <person name="Hettich R.L."/>
            <person name="Gordon J.I."/>
        </authorList>
    </citation>
    <scope>NUCLEOTIDE SEQUENCE [LARGE SCALE GENOMIC DNA]</scope>
    <source>
        <strain>ATCC 27750 / DSM 3376 / VPI C15-48 / C15-B4</strain>
    </source>
</reference>
<dbReference type="EC" id="2.7.7.27" evidence="1"/>
<dbReference type="EMBL" id="CP001104">
    <property type="protein sequence ID" value="ACR72907.1"/>
    <property type="molecule type" value="Genomic_DNA"/>
</dbReference>
<dbReference type="RefSeq" id="WP_012740139.1">
    <property type="nucleotide sequence ID" value="NC_012778.1"/>
</dbReference>
<dbReference type="SMR" id="C4Z4L8"/>
<dbReference type="STRING" id="515620.EUBELI_01918"/>
<dbReference type="GeneID" id="41356565"/>
<dbReference type="KEGG" id="eel:EUBELI_01918"/>
<dbReference type="eggNOG" id="COG0448">
    <property type="taxonomic scope" value="Bacteria"/>
</dbReference>
<dbReference type="HOGENOM" id="CLU_029499_14_0_9"/>
<dbReference type="UniPathway" id="UPA00164"/>
<dbReference type="Proteomes" id="UP000001476">
    <property type="component" value="Chromosome"/>
</dbReference>
<dbReference type="GO" id="GO:0005524">
    <property type="term" value="F:ATP binding"/>
    <property type="evidence" value="ECO:0007669"/>
    <property type="project" value="UniProtKB-KW"/>
</dbReference>
<dbReference type="GO" id="GO:0008878">
    <property type="term" value="F:glucose-1-phosphate adenylyltransferase activity"/>
    <property type="evidence" value="ECO:0007669"/>
    <property type="project" value="UniProtKB-UniRule"/>
</dbReference>
<dbReference type="GO" id="GO:0005978">
    <property type="term" value="P:glycogen biosynthetic process"/>
    <property type="evidence" value="ECO:0007669"/>
    <property type="project" value="UniProtKB-UniRule"/>
</dbReference>
<dbReference type="CDD" id="cd02508">
    <property type="entry name" value="ADP_Glucose_PP"/>
    <property type="match status" value="1"/>
</dbReference>
<dbReference type="CDD" id="cd04651">
    <property type="entry name" value="LbH_G1P_AT_C"/>
    <property type="match status" value="1"/>
</dbReference>
<dbReference type="Gene3D" id="2.160.10.10">
    <property type="entry name" value="Hexapeptide repeat proteins"/>
    <property type="match status" value="1"/>
</dbReference>
<dbReference type="Gene3D" id="3.90.550.10">
    <property type="entry name" value="Spore Coat Polysaccharide Biosynthesis Protein SpsA, Chain A"/>
    <property type="match status" value="1"/>
</dbReference>
<dbReference type="HAMAP" id="MF_00624">
    <property type="entry name" value="GlgC"/>
    <property type="match status" value="1"/>
</dbReference>
<dbReference type="InterPro" id="IPR011831">
    <property type="entry name" value="ADP-Glc_PPase"/>
</dbReference>
<dbReference type="InterPro" id="IPR005836">
    <property type="entry name" value="ADP_Glu_pyroP_CS"/>
</dbReference>
<dbReference type="InterPro" id="IPR023049">
    <property type="entry name" value="GlgC_bac"/>
</dbReference>
<dbReference type="InterPro" id="IPR056818">
    <property type="entry name" value="GlmU/GlgC-like_hexapep"/>
</dbReference>
<dbReference type="InterPro" id="IPR005835">
    <property type="entry name" value="NTP_transferase_dom"/>
</dbReference>
<dbReference type="InterPro" id="IPR029044">
    <property type="entry name" value="Nucleotide-diphossugar_trans"/>
</dbReference>
<dbReference type="InterPro" id="IPR011004">
    <property type="entry name" value="Trimer_LpxA-like_sf"/>
</dbReference>
<dbReference type="NCBIfam" id="TIGR02091">
    <property type="entry name" value="glgC"/>
    <property type="match status" value="1"/>
</dbReference>
<dbReference type="NCBIfam" id="NF003670">
    <property type="entry name" value="PRK05293.1"/>
    <property type="match status" value="1"/>
</dbReference>
<dbReference type="PANTHER" id="PTHR43523:SF2">
    <property type="entry name" value="GLUCOSE-1-PHOSPHATE ADENYLYLTRANSFERASE"/>
    <property type="match status" value="1"/>
</dbReference>
<dbReference type="PANTHER" id="PTHR43523">
    <property type="entry name" value="GLUCOSE-1-PHOSPHATE ADENYLYLTRANSFERASE-RELATED"/>
    <property type="match status" value="1"/>
</dbReference>
<dbReference type="Pfam" id="PF24894">
    <property type="entry name" value="Hexapep_GlmU"/>
    <property type="match status" value="1"/>
</dbReference>
<dbReference type="Pfam" id="PF00483">
    <property type="entry name" value="NTP_transferase"/>
    <property type="match status" value="1"/>
</dbReference>
<dbReference type="SUPFAM" id="SSF53448">
    <property type="entry name" value="Nucleotide-diphospho-sugar transferases"/>
    <property type="match status" value="1"/>
</dbReference>
<dbReference type="SUPFAM" id="SSF51161">
    <property type="entry name" value="Trimeric LpxA-like enzymes"/>
    <property type="match status" value="1"/>
</dbReference>
<dbReference type="PROSITE" id="PS00808">
    <property type="entry name" value="ADP_GLC_PYROPHOSPH_1"/>
    <property type="match status" value="1"/>
</dbReference>
<dbReference type="PROSITE" id="PS00809">
    <property type="entry name" value="ADP_GLC_PYROPHOSPH_2"/>
    <property type="match status" value="1"/>
</dbReference>
<dbReference type="PROSITE" id="PS00810">
    <property type="entry name" value="ADP_GLC_PYROPHOSPH_3"/>
    <property type="match status" value="1"/>
</dbReference>
<gene>
    <name evidence="1" type="primary">glgC</name>
    <name type="ordered locus">EUBELI_01918</name>
</gene>
<name>GLGC_LACE2</name>
<protein>
    <recommendedName>
        <fullName evidence="1">Glucose-1-phosphate adenylyltransferase</fullName>
        <ecNumber evidence="1">2.7.7.27</ecNumber>
    </recommendedName>
    <alternativeName>
        <fullName evidence="1">ADP-glucose pyrophosphorylase</fullName>
        <shortName evidence="1">ADPGlc PPase</shortName>
    </alternativeName>
    <alternativeName>
        <fullName evidence="1">ADP-glucose synthase</fullName>
    </alternativeName>
</protein>
<comment type="function">
    <text evidence="1">Involved in the biosynthesis of ADP-glucose, a building block required for the elongation reactions to produce glycogen. Catalyzes the reaction between ATP and alpha-D-glucose 1-phosphate (G1P) to produce pyrophosphate and ADP-Glc.</text>
</comment>
<comment type="catalytic activity">
    <reaction evidence="1">
        <text>alpha-D-glucose 1-phosphate + ATP + H(+) = ADP-alpha-D-glucose + diphosphate</text>
        <dbReference type="Rhea" id="RHEA:12120"/>
        <dbReference type="ChEBI" id="CHEBI:15378"/>
        <dbReference type="ChEBI" id="CHEBI:30616"/>
        <dbReference type="ChEBI" id="CHEBI:33019"/>
        <dbReference type="ChEBI" id="CHEBI:57498"/>
        <dbReference type="ChEBI" id="CHEBI:58601"/>
        <dbReference type="EC" id="2.7.7.27"/>
    </reaction>
</comment>
<comment type="pathway">
    <text evidence="1">Glycan biosynthesis; glycogen biosynthesis.</text>
</comment>
<comment type="subunit">
    <text evidence="1">Homotetramer.</text>
</comment>
<comment type="similarity">
    <text evidence="1">Belongs to the bacterial/plant glucose-1-phosphate adenylyltransferase family.</text>
</comment>
<accession>C4Z4L8</accession>
<proteinExistence type="inferred from homology"/>
<keyword id="KW-0067">ATP-binding</keyword>
<keyword id="KW-0119">Carbohydrate metabolism</keyword>
<keyword id="KW-0320">Glycogen biosynthesis</keyword>
<keyword id="KW-0321">Glycogen metabolism</keyword>
<keyword id="KW-0547">Nucleotide-binding</keyword>
<keyword id="KW-0548">Nucleotidyltransferase</keyword>
<keyword id="KW-1185">Reference proteome</keyword>
<keyword id="KW-0808">Transferase</keyword>
<sequence length="423" mass="47179">MIKKEMIAMLLAGGQGSRLGVLTSKVAKPAVAFGGKYRIIDFPLSNCINSGIDTVGVLTQYQPLRLNTHIGIGIPWDLDRNVGGVSVLPPYEKSQNSEWYTGTANAIYQNLEYMEQYHPEYVLILSGDHIYKMDYKIMLDYHKANNADITIAAMPVPMEEASRFGVVVTDNDNKITEFEEKPEHPKSNLASMGIYIFSWKVLKDALIKLKDQQECDFGKHVIPYCFNNNKRIFAYEYNGYWKDVGTLSSYWEANMELIDIIPIFNLYEEFWKIYTKTDTIPPQYIAKDAYIEKSIIGDGTEVYGRVFNSVIGSGVVIEEGCVIRDSIIMNNSHIGKNTTITKSIIAEDVTIGENVELGVGEEAENVKFPKIYNSGLVTVGEWSVIPDNVKVGKNTAISGETTLQDYPNGELPGGGIIIKAGDN</sequence>
<evidence type="ECO:0000255" key="1">
    <source>
        <dbReference type="HAMAP-Rule" id="MF_00624"/>
    </source>
</evidence>
<organism>
    <name type="scientific">Lachnospira eligens (strain ATCC 27750 / DSM 3376 / VPI C15-48 / C15-B4)</name>
    <name type="common">Eubacterium eligens</name>
    <dbReference type="NCBI Taxonomy" id="515620"/>
    <lineage>
        <taxon>Bacteria</taxon>
        <taxon>Bacillati</taxon>
        <taxon>Bacillota</taxon>
        <taxon>Clostridia</taxon>
        <taxon>Lachnospirales</taxon>
        <taxon>Lachnospiraceae</taxon>
        <taxon>Lachnospira</taxon>
    </lineage>
</organism>
<feature type="chain" id="PRO_1000212300" description="Glucose-1-phosphate adenylyltransferase">
    <location>
        <begin position="1"/>
        <end position="423"/>
    </location>
</feature>
<feature type="binding site" evidence="1">
    <location>
        <position position="100"/>
    </location>
    <ligand>
        <name>alpha-D-glucose 1-phosphate</name>
        <dbReference type="ChEBI" id="CHEBI:58601"/>
    </ligand>
</feature>
<feature type="binding site" evidence="1">
    <location>
        <position position="165"/>
    </location>
    <ligand>
        <name>alpha-D-glucose 1-phosphate</name>
        <dbReference type="ChEBI" id="CHEBI:58601"/>
    </ligand>
</feature>
<feature type="binding site" evidence="1">
    <location>
        <begin position="180"/>
        <end position="181"/>
    </location>
    <ligand>
        <name>alpha-D-glucose 1-phosphate</name>
        <dbReference type="ChEBI" id="CHEBI:58601"/>
    </ligand>
</feature>
<feature type="binding site" evidence="1">
    <location>
        <position position="191"/>
    </location>
    <ligand>
        <name>alpha-D-glucose 1-phosphate</name>
        <dbReference type="ChEBI" id="CHEBI:58601"/>
    </ligand>
</feature>